<reference key="1">
    <citation type="journal article" date="2010" name="Genome Biol. Evol.">
        <title>Continuing evolution of Burkholderia mallei through genome reduction and large-scale rearrangements.</title>
        <authorList>
            <person name="Losada L."/>
            <person name="Ronning C.M."/>
            <person name="DeShazer D."/>
            <person name="Woods D."/>
            <person name="Fedorova N."/>
            <person name="Kim H.S."/>
            <person name="Shabalina S.A."/>
            <person name="Pearson T.R."/>
            <person name="Brinkac L."/>
            <person name="Tan P."/>
            <person name="Nandi T."/>
            <person name="Crabtree J."/>
            <person name="Badger J."/>
            <person name="Beckstrom-Sternberg S."/>
            <person name="Saqib M."/>
            <person name="Schutzer S.E."/>
            <person name="Keim P."/>
            <person name="Nierman W.C."/>
        </authorList>
    </citation>
    <scope>NUCLEOTIDE SEQUENCE [LARGE SCALE GENOMIC DNA]</scope>
    <source>
        <strain>SAVP1</strain>
    </source>
</reference>
<organism>
    <name type="scientific">Burkholderia mallei (strain SAVP1)</name>
    <dbReference type="NCBI Taxonomy" id="320388"/>
    <lineage>
        <taxon>Bacteria</taxon>
        <taxon>Pseudomonadati</taxon>
        <taxon>Pseudomonadota</taxon>
        <taxon>Betaproteobacteria</taxon>
        <taxon>Burkholderiales</taxon>
        <taxon>Burkholderiaceae</taxon>
        <taxon>Burkholderia</taxon>
        <taxon>pseudomallei group</taxon>
    </lineage>
</organism>
<name>COXX_BURMS</name>
<gene>
    <name evidence="1" type="primary">ctaB</name>
    <name type="ordered locus">BMASAVP1_A0160</name>
</gene>
<proteinExistence type="inferred from homology"/>
<comment type="function">
    <text evidence="1">Converts heme B (protoheme IX) to heme O by substitution of the vinyl group on carbon 2 of heme B porphyrin ring with a hydroxyethyl farnesyl side group.</text>
</comment>
<comment type="catalytic activity">
    <reaction evidence="1">
        <text>heme b + (2E,6E)-farnesyl diphosphate + H2O = Fe(II)-heme o + diphosphate</text>
        <dbReference type="Rhea" id="RHEA:28070"/>
        <dbReference type="ChEBI" id="CHEBI:15377"/>
        <dbReference type="ChEBI" id="CHEBI:33019"/>
        <dbReference type="ChEBI" id="CHEBI:60344"/>
        <dbReference type="ChEBI" id="CHEBI:60530"/>
        <dbReference type="ChEBI" id="CHEBI:175763"/>
        <dbReference type="EC" id="2.5.1.141"/>
    </reaction>
</comment>
<comment type="pathway">
    <text evidence="1">Porphyrin-containing compound metabolism; heme O biosynthesis; heme O from protoheme: step 1/1.</text>
</comment>
<comment type="subcellular location">
    <subcellularLocation>
        <location evidence="1">Cell inner membrane</location>
        <topology evidence="1">Multi-pass membrane protein</topology>
    </subcellularLocation>
</comment>
<comment type="miscellaneous">
    <text evidence="1">Carbon 2 of the heme B porphyrin ring is defined according to the Fischer nomenclature.</text>
</comment>
<comment type="similarity">
    <text evidence="1">Belongs to the UbiA prenyltransferase family. Protoheme IX farnesyltransferase subfamily.</text>
</comment>
<protein>
    <recommendedName>
        <fullName evidence="1">Protoheme IX farnesyltransferase</fullName>
        <ecNumber evidence="1">2.5.1.141</ecNumber>
    </recommendedName>
    <alternativeName>
        <fullName evidence="1">Heme B farnesyltransferase</fullName>
    </alternativeName>
    <alternativeName>
        <fullName evidence="1">Heme O synthase</fullName>
    </alternativeName>
</protein>
<keyword id="KW-0997">Cell inner membrane</keyword>
<keyword id="KW-1003">Cell membrane</keyword>
<keyword id="KW-0350">Heme biosynthesis</keyword>
<keyword id="KW-0472">Membrane</keyword>
<keyword id="KW-0808">Transferase</keyword>
<keyword id="KW-0812">Transmembrane</keyword>
<keyword id="KW-1133">Transmembrane helix</keyword>
<feature type="chain" id="PRO_0000327027" description="Protoheme IX farnesyltransferase">
    <location>
        <begin position="1"/>
        <end position="300"/>
    </location>
</feature>
<feature type="transmembrane region" description="Helical" evidence="1">
    <location>
        <begin position="24"/>
        <end position="44"/>
    </location>
</feature>
<feature type="transmembrane region" description="Helical" evidence="1">
    <location>
        <begin position="48"/>
        <end position="68"/>
    </location>
</feature>
<feature type="transmembrane region" description="Helical" evidence="1">
    <location>
        <begin position="94"/>
        <end position="114"/>
    </location>
</feature>
<feature type="transmembrane region" description="Helical" evidence="1">
    <location>
        <begin position="118"/>
        <end position="138"/>
    </location>
</feature>
<feature type="transmembrane region" description="Helical" evidence="1">
    <location>
        <begin position="146"/>
        <end position="166"/>
    </location>
</feature>
<feature type="transmembrane region" description="Helical" evidence="1">
    <location>
        <begin position="172"/>
        <end position="192"/>
    </location>
</feature>
<feature type="transmembrane region" description="Helical" evidence="1">
    <location>
        <begin position="217"/>
        <end position="237"/>
    </location>
</feature>
<feature type="transmembrane region" description="Helical" evidence="1">
    <location>
        <begin position="239"/>
        <end position="259"/>
    </location>
</feature>
<feature type="transmembrane region" description="Helical" evidence="1">
    <location>
        <begin position="278"/>
        <end position="298"/>
    </location>
</feature>
<sequence length="300" mass="32856">MDTTLSHTPGSRLSQYLALTKPRVTQLAVFCAVIGMFLATPGMVPWKVLLGGTIGIGLLAGSAFAINCLVEQKIDAMMRRTAWRPSARGEITTLQILAFSTVLGGLGAWTLYTFTNPLTIWLTIATFVGYAVIYTLLLKPMTPQNIVIGGASGAMPPALGWAAVTGAVPGDAWILVLIIFVWTPPHFWVLALYRRKDYENAGLPMLPVTHGEQFTRLHILLYTVILFAVTMMPFISGMSGAVYLTSAVLLGALFLAYAWKIYRDYSDALARRAFRYSIVYLSLLFAALLVDHYARPVIGM</sequence>
<accession>A1UZV8</accession>
<dbReference type="EC" id="2.5.1.141" evidence="1"/>
<dbReference type="EMBL" id="CP000526">
    <property type="protein sequence ID" value="ABM50283.1"/>
    <property type="molecule type" value="Genomic_DNA"/>
</dbReference>
<dbReference type="SMR" id="A1UZV8"/>
<dbReference type="KEGG" id="bmv:BMASAVP1_A0160"/>
<dbReference type="HOGENOM" id="CLU_029631_0_2_4"/>
<dbReference type="UniPathway" id="UPA00834">
    <property type="reaction ID" value="UER00712"/>
</dbReference>
<dbReference type="GO" id="GO:0005886">
    <property type="term" value="C:plasma membrane"/>
    <property type="evidence" value="ECO:0007669"/>
    <property type="project" value="UniProtKB-SubCell"/>
</dbReference>
<dbReference type="GO" id="GO:0008495">
    <property type="term" value="F:protoheme IX farnesyltransferase activity"/>
    <property type="evidence" value="ECO:0007669"/>
    <property type="project" value="UniProtKB-UniRule"/>
</dbReference>
<dbReference type="GO" id="GO:0048034">
    <property type="term" value="P:heme O biosynthetic process"/>
    <property type="evidence" value="ECO:0007669"/>
    <property type="project" value="UniProtKB-UniRule"/>
</dbReference>
<dbReference type="CDD" id="cd13957">
    <property type="entry name" value="PT_UbiA_Cox10"/>
    <property type="match status" value="1"/>
</dbReference>
<dbReference type="Gene3D" id="1.10.357.140">
    <property type="entry name" value="UbiA prenyltransferase"/>
    <property type="match status" value="1"/>
</dbReference>
<dbReference type="HAMAP" id="MF_00154">
    <property type="entry name" value="CyoE_CtaB"/>
    <property type="match status" value="1"/>
</dbReference>
<dbReference type="InterPro" id="IPR006369">
    <property type="entry name" value="Protohaem_IX_farnesylTrfase"/>
</dbReference>
<dbReference type="InterPro" id="IPR000537">
    <property type="entry name" value="UbiA_prenyltransferase"/>
</dbReference>
<dbReference type="InterPro" id="IPR030470">
    <property type="entry name" value="UbiA_prenylTrfase_CS"/>
</dbReference>
<dbReference type="InterPro" id="IPR044878">
    <property type="entry name" value="UbiA_sf"/>
</dbReference>
<dbReference type="NCBIfam" id="TIGR01473">
    <property type="entry name" value="cyoE_ctaB"/>
    <property type="match status" value="1"/>
</dbReference>
<dbReference type="NCBIfam" id="NF003349">
    <property type="entry name" value="PRK04375.1-2"/>
    <property type="match status" value="1"/>
</dbReference>
<dbReference type="PANTHER" id="PTHR43448:SF7">
    <property type="entry name" value="4-HYDROXYBENZOATE SOLANESYLTRANSFERASE"/>
    <property type="match status" value="1"/>
</dbReference>
<dbReference type="PANTHER" id="PTHR43448">
    <property type="entry name" value="PROTOHEME IX FARNESYLTRANSFERASE, MITOCHONDRIAL"/>
    <property type="match status" value="1"/>
</dbReference>
<dbReference type="Pfam" id="PF01040">
    <property type="entry name" value="UbiA"/>
    <property type="match status" value="1"/>
</dbReference>
<dbReference type="PROSITE" id="PS00943">
    <property type="entry name" value="UBIA"/>
    <property type="match status" value="1"/>
</dbReference>
<evidence type="ECO:0000255" key="1">
    <source>
        <dbReference type="HAMAP-Rule" id="MF_00154"/>
    </source>
</evidence>